<name>TAT_SIVS4</name>
<accession>P12513</accession>
<comment type="function">
    <text evidence="2">Transcriptional activator that increases RNA Pol II processivity, thereby increasing the level of full-length viral transcripts. Recognizes a hairpin structure at the 5'-LTR of the nascent viral mRNAs referred to as the transactivation responsive RNA element (TAR) and recruits the cyclin T1-CDK9 complex (P-TEFb complex) that will in turn hyperphosphorylate the RNA polymerase II to allow efficient elongation. The CDK9 component of P-TEFb and other Tat-activated kinases hyperphosphorylate the C-terminus of RNA Pol II that becomes stabilized and much more processive.</text>
</comment>
<comment type="function">
    <text evidence="1">Extracellular circulating Tat can be endocytosed by surrounding uninfected cells via the binding to several surface receptors. Endosomal low pH allows Tat to cross the endosome membrane to enter the cytosol and eventually further translocate into the nucleus, thereby inducing severe cell dysfunctions ranging from cell activation to cell death. Through (By similarity).</text>
</comment>
<comment type="subunit">
    <text evidence="1">Interacts with host CCNT1. Associates with the P-TEFb complex composed at least of Tat, P-TEFb (CDK9 and CCNT1), TAR RNA, RNA Pol II. Interacts with CCNT2; the resulting complex is unable to bind to TAR RNA (By similarity).</text>
</comment>
<comment type="subcellular location">
    <subcellularLocation>
        <location evidence="1">Host nucleus</location>
        <location evidence="1">Host nucleolus</location>
    </subcellularLocation>
</comment>
<comment type="similarity">
    <text evidence="5">Belongs to the lentiviruses Tat family.</text>
</comment>
<sequence>METPLKEQENSLESCREHSSSISEVDVPTPESANLEACYNKCYCKRCCYHCQHCFLKKGLGICYEQHRRRTPKKTKANPFPASNNRSLSTRARNRQPKKEKKETVETEVAADLGLGR</sequence>
<protein>
    <recommendedName>
        <fullName>Protein Tat</fullName>
    </recommendedName>
    <alternativeName>
        <fullName>Transactivating regulatory protein</fullName>
    </alternativeName>
</protein>
<gene>
    <name type="primary">tat</name>
</gene>
<reference key="1">
    <citation type="journal article" date="1989" name="Nature">
        <title>An African primate lentivirus (SIVsm) closely related to HIV-2.</title>
        <authorList>
            <person name="Hirsch V.M."/>
            <person name="Olmstead R.A."/>
            <person name="Murphey-Corb M."/>
            <person name="Purcell R.H."/>
            <person name="Johnson P.R."/>
        </authorList>
    </citation>
    <scope>NUCLEOTIDE SEQUENCE [GENOMIC DNA]</scope>
</reference>
<organismHost>
    <name type="scientific">Cercopithecidae</name>
    <name type="common">Old World monkeys</name>
    <dbReference type="NCBI Taxonomy" id="9527"/>
</organismHost>
<dbReference type="EMBL" id="X14307">
    <property type="status" value="NOT_ANNOTATED_CDS"/>
    <property type="molecule type" value="Genomic_DNA"/>
</dbReference>
<dbReference type="Proteomes" id="UP000008173">
    <property type="component" value="Segment"/>
</dbReference>
<dbReference type="GO" id="GO:0044196">
    <property type="term" value="C:host cell nucleolus"/>
    <property type="evidence" value="ECO:0007669"/>
    <property type="project" value="UniProtKB-SubCell"/>
</dbReference>
<dbReference type="GO" id="GO:0003723">
    <property type="term" value="F:RNA binding"/>
    <property type="evidence" value="ECO:0007669"/>
    <property type="project" value="UniProtKB-KW"/>
</dbReference>
<dbReference type="GO" id="GO:0001070">
    <property type="term" value="F:RNA-binding transcription regulator activity"/>
    <property type="evidence" value="ECO:0007669"/>
    <property type="project" value="InterPro"/>
</dbReference>
<dbReference type="GO" id="GO:0050434">
    <property type="term" value="P:positive regulation of viral transcription"/>
    <property type="evidence" value="ECO:0007669"/>
    <property type="project" value="InterPro"/>
</dbReference>
<dbReference type="Gene3D" id="4.10.20.10">
    <property type="entry name" value="Tat domain"/>
    <property type="match status" value="1"/>
</dbReference>
<dbReference type="InterPro" id="IPR001831">
    <property type="entry name" value="IV_Tat"/>
</dbReference>
<dbReference type="InterPro" id="IPR036963">
    <property type="entry name" value="Tat_dom_sf"/>
</dbReference>
<dbReference type="Pfam" id="PF00539">
    <property type="entry name" value="Tat"/>
    <property type="match status" value="1"/>
</dbReference>
<dbReference type="PRINTS" id="PR00055">
    <property type="entry name" value="HIVTATDOMAIN"/>
</dbReference>
<proteinExistence type="inferred from homology"/>
<evidence type="ECO:0000250" key="1"/>
<evidence type="ECO:0000250" key="2">
    <source>
        <dbReference type="UniProtKB" id="P04608"/>
    </source>
</evidence>
<evidence type="ECO:0000255" key="3"/>
<evidence type="ECO:0000256" key="4">
    <source>
        <dbReference type="SAM" id="MobiDB-lite"/>
    </source>
</evidence>
<evidence type="ECO:0000305" key="5"/>
<keyword id="KW-0010">Activator</keyword>
<keyword id="KW-1048">Host nucleus</keyword>
<keyword id="KW-0945">Host-virus interaction</keyword>
<keyword id="KW-0694">RNA-binding</keyword>
<keyword id="KW-0804">Transcription</keyword>
<keyword id="KW-0805">Transcription regulation</keyword>
<organism>
    <name type="scientific">Simian immunodeficiency virus (isolate F236/smH4)</name>
    <name type="common">SIV-sm</name>
    <name type="synonym">Simian immunodeficiency virus sooty mangabey monkey</name>
    <dbReference type="NCBI Taxonomy" id="11737"/>
    <lineage>
        <taxon>Viruses</taxon>
        <taxon>Riboviria</taxon>
        <taxon>Pararnavirae</taxon>
        <taxon>Artverviricota</taxon>
        <taxon>Revtraviricetes</taxon>
        <taxon>Ortervirales</taxon>
        <taxon>Retroviridae</taxon>
        <taxon>Orthoretrovirinae</taxon>
        <taxon>Lentivirus</taxon>
        <taxon>Simian immunodeficiency virus</taxon>
    </lineage>
</organism>
<feature type="chain" id="PRO_0000085386" description="Protein Tat">
    <location>
        <begin position="1"/>
        <end position="117"/>
    </location>
</feature>
<feature type="region of interest" description="Disordered" evidence="4">
    <location>
        <begin position="1"/>
        <end position="27"/>
    </location>
</feature>
<feature type="region of interest" description="Cysteine-rich" evidence="1">
    <location>
        <begin position="38"/>
        <end position="54"/>
    </location>
</feature>
<feature type="region of interest" description="Core" evidence="1">
    <location>
        <begin position="55"/>
        <end position="65"/>
    </location>
</feature>
<feature type="region of interest" description="Disordered" evidence="4">
    <location>
        <begin position="68"/>
        <end position="117"/>
    </location>
</feature>
<feature type="short sequence motif" description="Nuclear localization signal, and RNA-binding (TAR)" evidence="3">
    <location>
        <begin position="66"/>
        <end position="70"/>
    </location>
</feature>
<feature type="compositionally biased region" description="Basic and acidic residues" evidence="4">
    <location>
        <begin position="1"/>
        <end position="19"/>
    </location>
</feature>
<feature type="compositionally biased region" description="Polar residues" evidence="4">
    <location>
        <begin position="81"/>
        <end position="91"/>
    </location>
</feature>